<proteinExistence type="inferred from homology"/>
<comment type="function">
    <text evidence="1">Catalyzes the transfer of the diacylglyceryl group from phosphatidylglycerol to the sulfhydryl group of the N-terminal cysteine of a prolipoprotein, the first step in the formation of mature lipoproteins.</text>
</comment>
<comment type="catalytic activity">
    <reaction evidence="1">
        <text>L-cysteinyl-[prolipoprotein] + a 1,2-diacyl-sn-glycero-3-phospho-(1'-sn-glycerol) = an S-1,2-diacyl-sn-glyceryl-L-cysteinyl-[prolipoprotein] + sn-glycerol 1-phosphate + H(+)</text>
        <dbReference type="Rhea" id="RHEA:56712"/>
        <dbReference type="Rhea" id="RHEA-COMP:14679"/>
        <dbReference type="Rhea" id="RHEA-COMP:14680"/>
        <dbReference type="ChEBI" id="CHEBI:15378"/>
        <dbReference type="ChEBI" id="CHEBI:29950"/>
        <dbReference type="ChEBI" id="CHEBI:57685"/>
        <dbReference type="ChEBI" id="CHEBI:64716"/>
        <dbReference type="ChEBI" id="CHEBI:140658"/>
        <dbReference type="EC" id="2.5.1.145"/>
    </reaction>
</comment>
<comment type="pathway">
    <text evidence="1">Protein modification; lipoprotein biosynthesis (diacylglyceryl transfer).</text>
</comment>
<comment type="subcellular location">
    <subcellularLocation>
        <location evidence="1">Cell inner membrane</location>
        <topology evidence="1">Multi-pass membrane protein</topology>
    </subcellularLocation>
</comment>
<comment type="similarity">
    <text evidence="1">Belongs to the Lgt family.</text>
</comment>
<organism>
    <name type="scientific">Xanthomonas campestris pv. campestris (strain 8004)</name>
    <dbReference type="NCBI Taxonomy" id="314565"/>
    <lineage>
        <taxon>Bacteria</taxon>
        <taxon>Pseudomonadati</taxon>
        <taxon>Pseudomonadota</taxon>
        <taxon>Gammaproteobacteria</taxon>
        <taxon>Lysobacterales</taxon>
        <taxon>Lysobacteraceae</taxon>
        <taxon>Xanthomonas</taxon>
    </lineage>
</organism>
<accession>Q4UR34</accession>
<dbReference type="EC" id="2.5.1.145" evidence="1"/>
<dbReference type="EMBL" id="CP000050">
    <property type="protein sequence ID" value="AAY50489.1"/>
    <property type="molecule type" value="Genomic_DNA"/>
</dbReference>
<dbReference type="RefSeq" id="WP_011036022.1">
    <property type="nucleotide sequence ID" value="NZ_CP155948.1"/>
</dbReference>
<dbReference type="SMR" id="Q4UR34"/>
<dbReference type="KEGG" id="xcb:XC_3445"/>
<dbReference type="HOGENOM" id="CLU_013386_1_0_6"/>
<dbReference type="UniPathway" id="UPA00664"/>
<dbReference type="Proteomes" id="UP000000420">
    <property type="component" value="Chromosome"/>
</dbReference>
<dbReference type="GO" id="GO:0005886">
    <property type="term" value="C:plasma membrane"/>
    <property type="evidence" value="ECO:0007669"/>
    <property type="project" value="UniProtKB-SubCell"/>
</dbReference>
<dbReference type="GO" id="GO:0008961">
    <property type="term" value="F:phosphatidylglycerol-prolipoprotein diacylglyceryl transferase activity"/>
    <property type="evidence" value="ECO:0007669"/>
    <property type="project" value="UniProtKB-UniRule"/>
</dbReference>
<dbReference type="GO" id="GO:0042158">
    <property type="term" value="P:lipoprotein biosynthetic process"/>
    <property type="evidence" value="ECO:0007669"/>
    <property type="project" value="UniProtKB-UniRule"/>
</dbReference>
<dbReference type="HAMAP" id="MF_01147">
    <property type="entry name" value="Lgt"/>
    <property type="match status" value="1"/>
</dbReference>
<dbReference type="InterPro" id="IPR001640">
    <property type="entry name" value="Lgt"/>
</dbReference>
<dbReference type="NCBIfam" id="TIGR00544">
    <property type="entry name" value="lgt"/>
    <property type="match status" value="1"/>
</dbReference>
<dbReference type="PANTHER" id="PTHR30589:SF0">
    <property type="entry name" value="PHOSPHATIDYLGLYCEROL--PROLIPOPROTEIN DIACYLGLYCERYL TRANSFERASE"/>
    <property type="match status" value="1"/>
</dbReference>
<dbReference type="PANTHER" id="PTHR30589">
    <property type="entry name" value="PROLIPOPROTEIN DIACYLGLYCERYL TRANSFERASE"/>
    <property type="match status" value="1"/>
</dbReference>
<dbReference type="Pfam" id="PF01790">
    <property type="entry name" value="LGT"/>
    <property type="match status" value="1"/>
</dbReference>
<dbReference type="PROSITE" id="PS01311">
    <property type="entry name" value="LGT"/>
    <property type="match status" value="1"/>
</dbReference>
<feature type="chain" id="PRO_1000053527" description="Phosphatidylglycerol--prolipoprotein diacylglyceryl transferase">
    <location>
        <begin position="1"/>
        <end position="296"/>
    </location>
</feature>
<feature type="transmembrane region" description="Helical" evidence="1">
    <location>
        <begin position="10"/>
        <end position="30"/>
    </location>
</feature>
<feature type="transmembrane region" description="Helical" evidence="1">
    <location>
        <begin position="57"/>
        <end position="77"/>
    </location>
</feature>
<feature type="transmembrane region" description="Helical" evidence="1">
    <location>
        <begin position="92"/>
        <end position="112"/>
    </location>
</feature>
<feature type="transmembrane region" description="Helical" evidence="1">
    <location>
        <begin position="119"/>
        <end position="139"/>
    </location>
</feature>
<feature type="transmembrane region" description="Helical" evidence="1">
    <location>
        <begin position="194"/>
        <end position="214"/>
    </location>
</feature>
<feature type="transmembrane region" description="Helical" evidence="1">
    <location>
        <begin position="220"/>
        <end position="240"/>
    </location>
</feature>
<feature type="transmembrane region" description="Helical" evidence="1">
    <location>
        <begin position="255"/>
        <end position="275"/>
    </location>
</feature>
<feature type="binding site" evidence="1">
    <location>
        <position position="140"/>
    </location>
    <ligand>
        <name>a 1,2-diacyl-sn-glycero-3-phospho-(1'-sn-glycerol)</name>
        <dbReference type="ChEBI" id="CHEBI:64716"/>
    </ligand>
</feature>
<keyword id="KW-0997">Cell inner membrane</keyword>
<keyword id="KW-1003">Cell membrane</keyword>
<keyword id="KW-0472">Membrane</keyword>
<keyword id="KW-0808">Transferase</keyword>
<keyword id="KW-0812">Transmembrane</keyword>
<keyword id="KW-1133">Transmembrane helix</keyword>
<protein>
    <recommendedName>
        <fullName evidence="1">Phosphatidylglycerol--prolipoprotein diacylglyceryl transferase</fullName>
        <ecNumber evidence="1">2.5.1.145</ecNumber>
    </recommendedName>
</protein>
<sequence length="296" mass="32614">MIYLHAIDPIAFSLGPVQVHWYGLMYLAAFFSAWALGRSRILRGRLPGVDMDGFSDLLFYGMLGVVLGGRIGYMLFYAFDTFLANPLILFKVWEGGMSFHGGLLGVLIACGLWTRRHRLHFFDVMDFVAPLVPLGLGFGRLGNFVGGELWGKFTQAGWGVIFPHAPELADWPPAQLQAQYAAGALDRFARHPSQLYEAALEGVVMFVVLWTFSMKPRARYAVSGLFALLYGVFRFIVEFVRVPDAPLGYLAFNWLTMGQILSLPLIGVGLVLLALSRRAPVLQPVVPAAAGVEAAK</sequence>
<evidence type="ECO:0000255" key="1">
    <source>
        <dbReference type="HAMAP-Rule" id="MF_01147"/>
    </source>
</evidence>
<gene>
    <name evidence="1" type="primary">lgt</name>
    <name type="ordered locus">XC_3445</name>
</gene>
<name>LGT_XANC8</name>
<reference key="1">
    <citation type="journal article" date="2005" name="Genome Res.">
        <title>Comparative and functional genomic analyses of the pathogenicity of phytopathogen Xanthomonas campestris pv. campestris.</title>
        <authorList>
            <person name="Qian W."/>
            <person name="Jia Y."/>
            <person name="Ren S.-X."/>
            <person name="He Y.-Q."/>
            <person name="Feng J.-X."/>
            <person name="Lu L.-F."/>
            <person name="Sun Q."/>
            <person name="Ying G."/>
            <person name="Tang D.-J."/>
            <person name="Tang H."/>
            <person name="Wu W."/>
            <person name="Hao P."/>
            <person name="Wang L."/>
            <person name="Jiang B.-L."/>
            <person name="Zeng S."/>
            <person name="Gu W.-Y."/>
            <person name="Lu G."/>
            <person name="Rong L."/>
            <person name="Tian Y."/>
            <person name="Yao Z."/>
            <person name="Fu G."/>
            <person name="Chen B."/>
            <person name="Fang R."/>
            <person name="Qiang B."/>
            <person name="Chen Z."/>
            <person name="Zhao G.-P."/>
            <person name="Tang J.-L."/>
            <person name="He C."/>
        </authorList>
    </citation>
    <scope>NUCLEOTIDE SEQUENCE [LARGE SCALE GENOMIC DNA]</scope>
    <source>
        <strain>8004</strain>
    </source>
</reference>